<accession>Q0RRT5</accession>
<dbReference type="EMBL" id="CT573213">
    <property type="protein sequence ID" value="CAJ59731.1"/>
    <property type="molecule type" value="Genomic_DNA"/>
</dbReference>
<dbReference type="RefSeq" id="WP_011602290.1">
    <property type="nucleotide sequence ID" value="NC_008278.1"/>
</dbReference>
<dbReference type="SMR" id="Q0RRT5"/>
<dbReference type="STRING" id="326424.FRAAL1066"/>
<dbReference type="KEGG" id="fal:FRAAL1066"/>
<dbReference type="eggNOG" id="COG0081">
    <property type="taxonomic scope" value="Bacteria"/>
</dbReference>
<dbReference type="HOGENOM" id="CLU_062853_0_0_11"/>
<dbReference type="OrthoDB" id="9803740at2"/>
<dbReference type="Proteomes" id="UP000000657">
    <property type="component" value="Chromosome"/>
</dbReference>
<dbReference type="GO" id="GO:0015934">
    <property type="term" value="C:large ribosomal subunit"/>
    <property type="evidence" value="ECO:0007669"/>
    <property type="project" value="InterPro"/>
</dbReference>
<dbReference type="GO" id="GO:0019843">
    <property type="term" value="F:rRNA binding"/>
    <property type="evidence" value="ECO:0007669"/>
    <property type="project" value="UniProtKB-UniRule"/>
</dbReference>
<dbReference type="GO" id="GO:0003735">
    <property type="term" value="F:structural constituent of ribosome"/>
    <property type="evidence" value="ECO:0007669"/>
    <property type="project" value="InterPro"/>
</dbReference>
<dbReference type="GO" id="GO:0000049">
    <property type="term" value="F:tRNA binding"/>
    <property type="evidence" value="ECO:0007669"/>
    <property type="project" value="UniProtKB-KW"/>
</dbReference>
<dbReference type="GO" id="GO:0006417">
    <property type="term" value="P:regulation of translation"/>
    <property type="evidence" value="ECO:0007669"/>
    <property type="project" value="UniProtKB-KW"/>
</dbReference>
<dbReference type="GO" id="GO:0006412">
    <property type="term" value="P:translation"/>
    <property type="evidence" value="ECO:0007669"/>
    <property type="project" value="UniProtKB-UniRule"/>
</dbReference>
<dbReference type="CDD" id="cd00403">
    <property type="entry name" value="Ribosomal_L1"/>
    <property type="match status" value="1"/>
</dbReference>
<dbReference type="FunFam" id="3.40.50.790:FF:000001">
    <property type="entry name" value="50S ribosomal protein L1"/>
    <property type="match status" value="1"/>
</dbReference>
<dbReference type="Gene3D" id="3.30.190.20">
    <property type="match status" value="1"/>
</dbReference>
<dbReference type="Gene3D" id="3.40.50.790">
    <property type="match status" value="1"/>
</dbReference>
<dbReference type="HAMAP" id="MF_01318_B">
    <property type="entry name" value="Ribosomal_uL1_B"/>
    <property type="match status" value="1"/>
</dbReference>
<dbReference type="InterPro" id="IPR005878">
    <property type="entry name" value="Ribosom_uL1_bac-type"/>
</dbReference>
<dbReference type="InterPro" id="IPR002143">
    <property type="entry name" value="Ribosomal_uL1"/>
</dbReference>
<dbReference type="InterPro" id="IPR023674">
    <property type="entry name" value="Ribosomal_uL1-like"/>
</dbReference>
<dbReference type="InterPro" id="IPR028364">
    <property type="entry name" value="Ribosomal_uL1/biogenesis"/>
</dbReference>
<dbReference type="InterPro" id="IPR016095">
    <property type="entry name" value="Ribosomal_uL1_3-a/b-sand"/>
</dbReference>
<dbReference type="InterPro" id="IPR023673">
    <property type="entry name" value="Ribosomal_uL1_CS"/>
</dbReference>
<dbReference type="NCBIfam" id="TIGR01169">
    <property type="entry name" value="rplA_bact"/>
    <property type="match status" value="1"/>
</dbReference>
<dbReference type="PANTHER" id="PTHR36427">
    <property type="entry name" value="54S RIBOSOMAL PROTEIN L1, MITOCHONDRIAL"/>
    <property type="match status" value="1"/>
</dbReference>
<dbReference type="PANTHER" id="PTHR36427:SF3">
    <property type="entry name" value="LARGE RIBOSOMAL SUBUNIT PROTEIN UL1M"/>
    <property type="match status" value="1"/>
</dbReference>
<dbReference type="Pfam" id="PF00687">
    <property type="entry name" value="Ribosomal_L1"/>
    <property type="match status" value="1"/>
</dbReference>
<dbReference type="PIRSF" id="PIRSF002155">
    <property type="entry name" value="Ribosomal_L1"/>
    <property type="match status" value="1"/>
</dbReference>
<dbReference type="SUPFAM" id="SSF56808">
    <property type="entry name" value="Ribosomal protein L1"/>
    <property type="match status" value="1"/>
</dbReference>
<dbReference type="PROSITE" id="PS01199">
    <property type="entry name" value="RIBOSOMAL_L1"/>
    <property type="match status" value="1"/>
</dbReference>
<proteinExistence type="inferred from homology"/>
<organism>
    <name type="scientific">Frankia alni (strain DSM 45986 / CECT 9034 / ACN14a)</name>
    <dbReference type="NCBI Taxonomy" id="326424"/>
    <lineage>
        <taxon>Bacteria</taxon>
        <taxon>Bacillati</taxon>
        <taxon>Actinomycetota</taxon>
        <taxon>Actinomycetes</taxon>
        <taxon>Frankiales</taxon>
        <taxon>Frankiaceae</taxon>
        <taxon>Frankia</taxon>
    </lineage>
</organism>
<evidence type="ECO:0000255" key="1">
    <source>
        <dbReference type="HAMAP-Rule" id="MF_01318"/>
    </source>
</evidence>
<evidence type="ECO:0000305" key="2"/>
<gene>
    <name evidence="1" type="primary">rplA</name>
    <name type="ordered locus">FRAAL1066</name>
</gene>
<feature type="chain" id="PRO_0000308012" description="Large ribosomal subunit protein uL1">
    <location>
        <begin position="1"/>
        <end position="238"/>
    </location>
</feature>
<keyword id="KW-1185">Reference proteome</keyword>
<keyword id="KW-0678">Repressor</keyword>
<keyword id="KW-0687">Ribonucleoprotein</keyword>
<keyword id="KW-0689">Ribosomal protein</keyword>
<keyword id="KW-0694">RNA-binding</keyword>
<keyword id="KW-0699">rRNA-binding</keyword>
<keyword id="KW-0810">Translation regulation</keyword>
<keyword id="KW-0820">tRNA-binding</keyword>
<sequence>MKRSKAYRAAAEKINPENLYSPLDAVRLAQETSTTKYDATVEVAIRLGVDPRKADQMVRGTVNLPHGTGKSPRVAVFAAGEKAAEATAAGADIVGSDDLVARIQEGFLDFDATVATPDQMAKVGRIARILGPRGLMPNPKTGTVTLDIGKAVADIKGGKINFRVDKQGNLHIVIGKTNFTDAQLIENYTAALDEIVRVKPSAAKGRYLKKVTFATTMGPGIPVDPNRTRNLLEESVPA</sequence>
<reference key="1">
    <citation type="journal article" date="2007" name="Genome Res.">
        <title>Genome characteristics of facultatively symbiotic Frankia sp. strains reflect host range and host plant biogeography.</title>
        <authorList>
            <person name="Normand P."/>
            <person name="Lapierre P."/>
            <person name="Tisa L.S."/>
            <person name="Gogarten J.P."/>
            <person name="Alloisio N."/>
            <person name="Bagnarol E."/>
            <person name="Bassi C.A."/>
            <person name="Berry A.M."/>
            <person name="Bickhart D.M."/>
            <person name="Choisne N."/>
            <person name="Couloux A."/>
            <person name="Cournoyer B."/>
            <person name="Cruveiller S."/>
            <person name="Daubin V."/>
            <person name="Demange N."/>
            <person name="Francino M.P."/>
            <person name="Goltsman E."/>
            <person name="Huang Y."/>
            <person name="Kopp O.R."/>
            <person name="Labarre L."/>
            <person name="Lapidus A."/>
            <person name="Lavire C."/>
            <person name="Marechal J."/>
            <person name="Martinez M."/>
            <person name="Mastronunzio J.E."/>
            <person name="Mullin B.C."/>
            <person name="Niemann J."/>
            <person name="Pujic P."/>
            <person name="Rawnsley T."/>
            <person name="Rouy Z."/>
            <person name="Schenowitz C."/>
            <person name="Sellstedt A."/>
            <person name="Tavares F."/>
            <person name="Tomkins J.P."/>
            <person name="Vallenet D."/>
            <person name="Valverde C."/>
            <person name="Wall L.G."/>
            <person name="Wang Y."/>
            <person name="Medigue C."/>
            <person name="Benson D.R."/>
        </authorList>
    </citation>
    <scope>NUCLEOTIDE SEQUENCE [LARGE SCALE GENOMIC DNA]</scope>
    <source>
        <strain>DSM 45986 / CECT 9034 / ACN14a</strain>
    </source>
</reference>
<name>RL1_FRAAA</name>
<protein>
    <recommendedName>
        <fullName evidence="1">Large ribosomal subunit protein uL1</fullName>
    </recommendedName>
    <alternativeName>
        <fullName evidence="2">50S ribosomal protein L1</fullName>
    </alternativeName>
</protein>
<comment type="function">
    <text evidence="1">Binds directly to 23S rRNA. The L1 stalk is quite mobile in the ribosome, and is involved in E site tRNA release.</text>
</comment>
<comment type="function">
    <text evidence="1">Protein L1 is also a translational repressor protein, it controls the translation of the L11 operon by binding to its mRNA.</text>
</comment>
<comment type="subunit">
    <text evidence="1">Part of the 50S ribosomal subunit.</text>
</comment>
<comment type="similarity">
    <text evidence="1">Belongs to the universal ribosomal protein uL1 family.</text>
</comment>